<comment type="function">
    <text evidence="1">Activates the cell division inhibited by chromosomal DNA over-replication.</text>
</comment>
<comment type="similarity">
    <text evidence="1">Belongs to the CedA family.</text>
</comment>
<gene>
    <name evidence="1" type="primary">cedA</name>
    <name type="ordered locus">SeHA_C1448</name>
</gene>
<reference key="1">
    <citation type="journal article" date="2011" name="J. Bacteriol.">
        <title>Comparative genomics of 28 Salmonella enterica isolates: evidence for CRISPR-mediated adaptive sublineage evolution.</title>
        <authorList>
            <person name="Fricke W.F."/>
            <person name="Mammel M.K."/>
            <person name="McDermott P.F."/>
            <person name="Tartera C."/>
            <person name="White D.G."/>
            <person name="Leclerc J.E."/>
            <person name="Ravel J."/>
            <person name="Cebula T.A."/>
        </authorList>
    </citation>
    <scope>NUCLEOTIDE SEQUENCE [LARGE SCALE GENOMIC DNA]</scope>
    <source>
        <strain>SL476</strain>
    </source>
</reference>
<evidence type="ECO:0000255" key="1">
    <source>
        <dbReference type="HAMAP-Rule" id="MF_01580"/>
    </source>
</evidence>
<protein>
    <recommendedName>
        <fullName evidence="1">Cell division activator CedA</fullName>
    </recommendedName>
</protein>
<feature type="chain" id="PRO_1000200993" description="Cell division activator CedA">
    <location>
        <begin position="1"/>
        <end position="80"/>
    </location>
</feature>
<proteinExistence type="inferred from homology"/>
<keyword id="KW-0131">Cell cycle</keyword>
<keyword id="KW-0132">Cell division</keyword>
<keyword id="KW-0238">DNA-binding</keyword>
<name>CEDA_SALHS</name>
<organism>
    <name type="scientific">Salmonella heidelberg (strain SL476)</name>
    <dbReference type="NCBI Taxonomy" id="454169"/>
    <lineage>
        <taxon>Bacteria</taxon>
        <taxon>Pseudomonadati</taxon>
        <taxon>Pseudomonadota</taxon>
        <taxon>Gammaproteobacteria</taxon>
        <taxon>Enterobacterales</taxon>
        <taxon>Enterobacteriaceae</taxon>
        <taxon>Salmonella</taxon>
    </lineage>
</organism>
<dbReference type="EMBL" id="CP001120">
    <property type="protein sequence ID" value="ACF68766.1"/>
    <property type="molecule type" value="Genomic_DNA"/>
</dbReference>
<dbReference type="RefSeq" id="WP_000977510.1">
    <property type="nucleotide sequence ID" value="NC_011083.1"/>
</dbReference>
<dbReference type="SMR" id="B4TGF8"/>
<dbReference type="KEGG" id="seh:SeHA_C1448"/>
<dbReference type="HOGENOM" id="CLU_167445_0_0_6"/>
<dbReference type="Proteomes" id="UP000001866">
    <property type="component" value="Chromosome"/>
</dbReference>
<dbReference type="GO" id="GO:0003677">
    <property type="term" value="F:DNA binding"/>
    <property type="evidence" value="ECO:0007669"/>
    <property type="project" value="UniProtKB-UniRule"/>
</dbReference>
<dbReference type="GO" id="GO:0051301">
    <property type="term" value="P:cell division"/>
    <property type="evidence" value="ECO:0007669"/>
    <property type="project" value="UniProtKB-UniRule"/>
</dbReference>
<dbReference type="Gene3D" id="3.30.730.20">
    <property type="entry name" value="Cell division activator CedA"/>
    <property type="match status" value="1"/>
</dbReference>
<dbReference type="HAMAP" id="MF_01580">
    <property type="entry name" value="CedA"/>
    <property type="match status" value="1"/>
</dbReference>
<dbReference type="InterPro" id="IPR038463">
    <property type="entry name" value="CedA-like_sf"/>
</dbReference>
<dbReference type="InterPro" id="IPR019666">
    <property type="entry name" value="Cell_div_activator_CedA"/>
</dbReference>
<dbReference type="NCBIfam" id="NF007510">
    <property type="entry name" value="PRK10113.1"/>
    <property type="match status" value="1"/>
</dbReference>
<dbReference type="Pfam" id="PF10729">
    <property type="entry name" value="CedA"/>
    <property type="match status" value="1"/>
</dbReference>
<sequence>MMKPLRQQNRQIISYIPRVEPAPPEHAIKMDTFRDVWILRGKYVAFVLTGESFQRSPAFSVPESAQRWANQVRQENEIAD</sequence>
<accession>B4TGF8</accession>